<comment type="function">
    <text evidence="1">Catalyzes the reversible interconversion of serine and glycine with tetrahydrofolate (THF) serving as the one-carbon carrier. This reaction serves as the major source of one-carbon groups required for the biosynthesis of purines, thymidylate, methionine, and other important biomolecules. Also exhibits THF-independent aldolase activity toward beta-hydroxyamino acids, producing glycine and aldehydes, via a retro-aldol mechanism.</text>
</comment>
<comment type="catalytic activity">
    <reaction evidence="1">
        <text>(6R)-5,10-methylene-5,6,7,8-tetrahydrofolate + glycine + H2O = (6S)-5,6,7,8-tetrahydrofolate + L-serine</text>
        <dbReference type="Rhea" id="RHEA:15481"/>
        <dbReference type="ChEBI" id="CHEBI:15377"/>
        <dbReference type="ChEBI" id="CHEBI:15636"/>
        <dbReference type="ChEBI" id="CHEBI:33384"/>
        <dbReference type="ChEBI" id="CHEBI:57305"/>
        <dbReference type="ChEBI" id="CHEBI:57453"/>
        <dbReference type="EC" id="2.1.2.1"/>
    </reaction>
</comment>
<comment type="cofactor">
    <cofactor evidence="1">
        <name>pyridoxal 5'-phosphate</name>
        <dbReference type="ChEBI" id="CHEBI:597326"/>
    </cofactor>
</comment>
<comment type="pathway">
    <text evidence="1">One-carbon metabolism; tetrahydrofolate interconversion.</text>
</comment>
<comment type="pathway">
    <text evidence="1">Amino-acid biosynthesis; glycine biosynthesis; glycine from L-serine: step 1/1.</text>
</comment>
<comment type="subunit">
    <text evidence="1">Homodimer.</text>
</comment>
<comment type="subcellular location">
    <subcellularLocation>
        <location evidence="1">Cytoplasm</location>
    </subcellularLocation>
</comment>
<comment type="similarity">
    <text evidence="1">Belongs to the SHMT family.</text>
</comment>
<accession>B1LNK7</accession>
<organism>
    <name type="scientific">Escherichia coli (strain SMS-3-5 / SECEC)</name>
    <dbReference type="NCBI Taxonomy" id="439855"/>
    <lineage>
        <taxon>Bacteria</taxon>
        <taxon>Pseudomonadati</taxon>
        <taxon>Pseudomonadota</taxon>
        <taxon>Gammaproteobacteria</taxon>
        <taxon>Enterobacterales</taxon>
        <taxon>Enterobacteriaceae</taxon>
        <taxon>Escherichia</taxon>
    </lineage>
</organism>
<name>GLYA_ECOSM</name>
<feature type="chain" id="PRO_1000116832" description="Serine hydroxymethyltransferase">
    <location>
        <begin position="1"/>
        <end position="417"/>
    </location>
</feature>
<feature type="binding site" evidence="1">
    <location>
        <position position="121"/>
    </location>
    <ligand>
        <name>(6S)-5,6,7,8-tetrahydrofolate</name>
        <dbReference type="ChEBI" id="CHEBI:57453"/>
    </ligand>
</feature>
<feature type="binding site" evidence="1">
    <location>
        <begin position="125"/>
        <end position="127"/>
    </location>
    <ligand>
        <name>(6S)-5,6,7,8-tetrahydrofolate</name>
        <dbReference type="ChEBI" id="CHEBI:57453"/>
    </ligand>
</feature>
<feature type="binding site" evidence="1">
    <location>
        <begin position="355"/>
        <end position="357"/>
    </location>
    <ligand>
        <name>(6S)-5,6,7,8-tetrahydrofolate</name>
        <dbReference type="ChEBI" id="CHEBI:57453"/>
    </ligand>
</feature>
<feature type="site" description="Plays an important role in substrate specificity" evidence="1">
    <location>
        <position position="228"/>
    </location>
</feature>
<feature type="modified residue" description="N6-acetyllysine" evidence="1">
    <location>
        <position position="54"/>
    </location>
</feature>
<feature type="modified residue" description="N6-(pyridoxal phosphate)lysine" evidence="1">
    <location>
        <position position="229"/>
    </location>
</feature>
<feature type="modified residue" description="N6-acetyllysine" evidence="1">
    <location>
        <position position="250"/>
    </location>
</feature>
<feature type="modified residue" description="N6-acetyllysine" evidence="1">
    <location>
        <position position="285"/>
    </location>
</feature>
<feature type="modified residue" description="N6-acetyllysine" evidence="1">
    <location>
        <position position="354"/>
    </location>
</feature>
<feature type="modified residue" description="N6-acetyllysine" evidence="1">
    <location>
        <position position="375"/>
    </location>
</feature>
<evidence type="ECO:0000255" key="1">
    <source>
        <dbReference type="HAMAP-Rule" id="MF_00051"/>
    </source>
</evidence>
<sequence length="417" mass="45317">MLKREMNIADYDAELWQAMEQEKVRQEEHIELIASENYTSPRVMQAQGSQLTNKYAEGYPGKRYYGGCEYVDIVEQLAIDRAKELFGADYANVQPHSGSQANFAVYTALLEPGDTVLGMNLAHGGHLTHGSPVNFSGKLYNIVPYGIDATGHIDYADLEKQAKEHKPKMIIGGFSAYSGVVDWAKMREIADSIGAYLFVDMAHVAGLVAAGVYPNPVPHAHVVTTTTHKTLAGPRGGLILAKGGSEELYKKLNSAVFPGGQGGPLMHVIAGKAVALKEAMEPEFKTYQQQVAKNAKAMVEVFLERGYKVVSGGTDNHLFLVDLVDKNLTGKEADAALGRANITVNKNSVPNDPKSPFVTSGIRVGTPAITRRGFKEAEAKELAGWMCDVLDSINDEAVIERIKGKVLDICARYPVYA</sequence>
<keyword id="KW-0007">Acetylation</keyword>
<keyword id="KW-0028">Amino-acid biosynthesis</keyword>
<keyword id="KW-0963">Cytoplasm</keyword>
<keyword id="KW-0554">One-carbon metabolism</keyword>
<keyword id="KW-0663">Pyridoxal phosphate</keyword>
<keyword id="KW-0808">Transferase</keyword>
<gene>
    <name evidence="1" type="primary">glyA</name>
    <name type="ordered locus">EcSMS35_2704</name>
</gene>
<reference key="1">
    <citation type="journal article" date="2008" name="J. Bacteriol.">
        <title>Insights into the environmental resistance gene pool from the genome sequence of the multidrug-resistant environmental isolate Escherichia coli SMS-3-5.</title>
        <authorList>
            <person name="Fricke W.F."/>
            <person name="Wright M.S."/>
            <person name="Lindell A.H."/>
            <person name="Harkins D.M."/>
            <person name="Baker-Austin C."/>
            <person name="Ravel J."/>
            <person name="Stepanauskas R."/>
        </authorList>
    </citation>
    <scope>NUCLEOTIDE SEQUENCE [LARGE SCALE GENOMIC DNA]</scope>
    <source>
        <strain>SMS-3-5 / SECEC</strain>
    </source>
</reference>
<proteinExistence type="inferred from homology"/>
<protein>
    <recommendedName>
        <fullName evidence="1">Serine hydroxymethyltransferase</fullName>
        <shortName evidence="1">SHMT</shortName>
        <shortName evidence="1">Serine methylase</shortName>
        <ecNumber evidence="1">2.1.2.1</ecNumber>
    </recommendedName>
</protein>
<dbReference type="EC" id="2.1.2.1" evidence="1"/>
<dbReference type="EMBL" id="CP000970">
    <property type="protein sequence ID" value="ACB16825.1"/>
    <property type="molecule type" value="Genomic_DNA"/>
</dbReference>
<dbReference type="RefSeq" id="WP_000919159.1">
    <property type="nucleotide sequence ID" value="NC_010498.1"/>
</dbReference>
<dbReference type="SMR" id="B1LNK7"/>
<dbReference type="GeneID" id="89517346"/>
<dbReference type="KEGG" id="ecm:EcSMS35_2704"/>
<dbReference type="HOGENOM" id="CLU_022477_2_1_6"/>
<dbReference type="UniPathway" id="UPA00193"/>
<dbReference type="UniPathway" id="UPA00288">
    <property type="reaction ID" value="UER01023"/>
</dbReference>
<dbReference type="Proteomes" id="UP000007011">
    <property type="component" value="Chromosome"/>
</dbReference>
<dbReference type="GO" id="GO:0005829">
    <property type="term" value="C:cytosol"/>
    <property type="evidence" value="ECO:0007669"/>
    <property type="project" value="TreeGrafter"/>
</dbReference>
<dbReference type="GO" id="GO:0004372">
    <property type="term" value="F:glycine hydroxymethyltransferase activity"/>
    <property type="evidence" value="ECO:0007669"/>
    <property type="project" value="UniProtKB-UniRule"/>
</dbReference>
<dbReference type="GO" id="GO:0030170">
    <property type="term" value="F:pyridoxal phosphate binding"/>
    <property type="evidence" value="ECO:0007669"/>
    <property type="project" value="UniProtKB-UniRule"/>
</dbReference>
<dbReference type="GO" id="GO:0019264">
    <property type="term" value="P:glycine biosynthetic process from serine"/>
    <property type="evidence" value="ECO:0007669"/>
    <property type="project" value="UniProtKB-UniRule"/>
</dbReference>
<dbReference type="GO" id="GO:0035999">
    <property type="term" value="P:tetrahydrofolate interconversion"/>
    <property type="evidence" value="ECO:0007669"/>
    <property type="project" value="UniProtKB-UniRule"/>
</dbReference>
<dbReference type="CDD" id="cd00378">
    <property type="entry name" value="SHMT"/>
    <property type="match status" value="1"/>
</dbReference>
<dbReference type="FunFam" id="3.40.640.10:FF:000001">
    <property type="entry name" value="Serine hydroxymethyltransferase"/>
    <property type="match status" value="1"/>
</dbReference>
<dbReference type="FunFam" id="3.90.1150.10:FF:000003">
    <property type="entry name" value="Serine hydroxymethyltransferase"/>
    <property type="match status" value="1"/>
</dbReference>
<dbReference type="Gene3D" id="3.90.1150.10">
    <property type="entry name" value="Aspartate Aminotransferase, domain 1"/>
    <property type="match status" value="1"/>
</dbReference>
<dbReference type="Gene3D" id="3.40.640.10">
    <property type="entry name" value="Type I PLP-dependent aspartate aminotransferase-like (Major domain)"/>
    <property type="match status" value="1"/>
</dbReference>
<dbReference type="HAMAP" id="MF_00051">
    <property type="entry name" value="SHMT"/>
    <property type="match status" value="1"/>
</dbReference>
<dbReference type="InterPro" id="IPR015424">
    <property type="entry name" value="PyrdxlP-dep_Trfase"/>
</dbReference>
<dbReference type="InterPro" id="IPR015421">
    <property type="entry name" value="PyrdxlP-dep_Trfase_major"/>
</dbReference>
<dbReference type="InterPro" id="IPR015422">
    <property type="entry name" value="PyrdxlP-dep_Trfase_small"/>
</dbReference>
<dbReference type="InterPro" id="IPR001085">
    <property type="entry name" value="Ser_HO-MeTrfase"/>
</dbReference>
<dbReference type="InterPro" id="IPR049943">
    <property type="entry name" value="Ser_HO-MeTrfase-like"/>
</dbReference>
<dbReference type="InterPro" id="IPR019798">
    <property type="entry name" value="Ser_HO-MeTrfase_PLP_BS"/>
</dbReference>
<dbReference type="InterPro" id="IPR039429">
    <property type="entry name" value="SHMT-like_dom"/>
</dbReference>
<dbReference type="NCBIfam" id="NF000586">
    <property type="entry name" value="PRK00011.1"/>
    <property type="match status" value="1"/>
</dbReference>
<dbReference type="PANTHER" id="PTHR11680">
    <property type="entry name" value="SERINE HYDROXYMETHYLTRANSFERASE"/>
    <property type="match status" value="1"/>
</dbReference>
<dbReference type="PANTHER" id="PTHR11680:SF50">
    <property type="entry name" value="SERINE HYDROXYMETHYLTRANSFERASE"/>
    <property type="match status" value="1"/>
</dbReference>
<dbReference type="Pfam" id="PF00464">
    <property type="entry name" value="SHMT"/>
    <property type="match status" value="1"/>
</dbReference>
<dbReference type="PIRSF" id="PIRSF000412">
    <property type="entry name" value="SHMT"/>
    <property type="match status" value="1"/>
</dbReference>
<dbReference type="SUPFAM" id="SSF53383">
    <property type="entry name" value="PLP-dependent transferases"/>
    <property type="match status" value="1"/>
</dbReference>
<dbReference type="PROSITE" id="PS00096">
    <property type="entry name" value="SHMT"/>
    <property type="match status" value="1"/>
</dbReference>